<sequence length="243" mass="28369">MLISTFVFLLYEVTALSTAIHVTKSYTHTRTGTSFFMYQKEAFYRGRSSTRQFNNTRSPSGRSASRSSNFSHRSSSRDSFSSNRSYSSSLSRSPEEPLRTILVENLTRNVTKEHIAEIFGIYGLIDHIFMPIYKKSELNKGYCYIEYVYHDQAANAVDKMNNAELDGEELFVSIKRFPFESLHKNHKHYENSYRPSRSQNNSHYNDKSFHRSRYSRARSRSPGSNISEYSDQSPPYHSYRHRP</sequence>
<accession>Q1MTR2</accession>
<keyword id="KW-0963">Cytoplasm</keyword>
<keyword id="KW-0507">mRNA processing</keyword>
<keyword id="KW-0508">mRNA splicing</keyword>
<keyword id="KW-0539">Nucleus</keyword>
<keyword id="KW-1185">Reference proteome</keyword>
<keyword id="KW-0694">RNA-binding</keyword>
<proteinExistence type="inferred from homology"/>
<protein>
    <recommendedName>
        <fullName>RNA-binding protein with serine-rich domain 1 homolog</fullName>
    </recommendedName>
</protein>
<feature type="chain" id="PRO_0000372694" description="RNA-binding protein with serine-rich domain 1 homolog">
    <location>
        <begin position="1"/>
        <end position="243"/>
    </location>
</feature>
<feature type="domain" description="RRM" evidence="2">
    <location>
        <begin position="99"/>
        <end position="177"/>
    </location>
</feature>
<feature type="region of interest" description="Disordered" evidence="3">
    <location>
        <begin position="48"/>
        <end position="92"/>
    </location>
</feature>
<feature type="region of interest" description="Disordered" evidence="3">
    <location>
        <begin position="189"/>
        <end position="243"/>
    </location>
</feature>
<feature type="compositionally biased region" description="Low complexity" evidence="3">
    <location>
        <begin position="57"/>
        <end position="92"/>
    </location>
</feature>
<feature type="compositionally biased region" description="Polar residues" evidence="3">
    <location>
        <begin position="193"/>
        <end position="203"/>
    </location>
</feature>
<feature type="compositionally biased region" description="Basic residues" evidence="3">
    <location>
        <begin position="210"/>
        <end position="219"/>
    </location>
</feature>
<feature type="compositionally biased region" description="Polar residues" evidence="3">
    <location>
        <begin position="222"/>
        <end position="235"/>
    </location>
</feature>
<organism>
    <name type="scientific">Schizosaccharomyces pombe (strain 972 / ATCC 24843)</name>
    <name type="common">Fission yeast</name>
    <dbReference type="NCBI Taxonomy" id="284812"/>
    <lineage>
        <taxon>Eukaryota</taxon>
        <taxon>Fungi</taxon>
        <taxon>Dikarya</taxon>
        <taxon>Ascomycota</taxon>
        <taxon>Taphrinomycotina</taxon>
        <taxon>Schizosaccharomycetes</taxon>
        <taxon>Schizosaccharomycetales</taxon>
        <taxon>Schizosaccharomycetaceae</taxon>
        <taxon>Schizosaccharomyces</taxon>
    </lineage>
</organism>
<dbReference type="EMBL" id="CU329671">
    <property type="protein sequence ID" value="CAA20103.2"/>
    <property type="molecule type" value="Genomic_DNA"/>
</dbReference>
<dbReference type="RefSeq" id="NP_596549.2">
    <property type="nucleotide sequence ID" value="NM_001022470.2"/>
</dbReference>
<dbReference type="SMR" id="Q1MTR2"/>
<dbReference type="BioGRID" id="276249">
    <property type="interactions" value="2"/>
</dbReference>
<dbReference type="FunCoup" id="Q1MTR2">
    <property type="interactions" value="146"/>
</dbReference>
<dbReference type="STRING" id="284812.Q1MTR2"/>
<dbReference type="iPTMnet" id="Q1MTR2"/>
<dbReference type="PaxDb" id="4896-SPBC13G1.14c.1"/>
<dbReference type="EnsemblFungi" id="SPBC13G1.14c.1">
    <property type="protein sequence ID" value="SPBC13G1.14c.1:pep"/>
    <property type="gene ID" value="SPBC13G1.14c"/>
</dbReference>
<dbReference type="KEGG" id="spo:2539695"/>
<dbReference type="PomBase" id="SPBC13G1.14c"/>
<dbReference type="VEuPathDB" id="FungiDB:SPBC13G1.14c"/>
<dbReference type="eggNOG" id="KOG0118">
    <property type="taxonomic scope" value="Eukaryota"/>
</dbReference>
<dbReference type="HOGENOM" id="CLU_112579_0_0_1"/>
<dbReference type="InParanoid" id="Q1MTR2"/>
<dbReference type="OMA" id="KINTHMG"/>
<dbReference type="Reactome" id="R-SPO-159236">
    <property type="pathway name" value="Transport of Mature mRNA derived from an Intron-Containing Transcript"/>
</dbReference>
<dbReference type="Reactome" id="R-SPO-975957">
    <property type="pathway name" value="Nonsense Mediated Decay (NMD) enhanced by the Exon Junction Complex (EJC)"/>
</dbReference>
<dbReference type="PRO" id="PR:Q1MTR2"/>
<dbReference type="Proteomes" id="UP000002485">
    <property type="component" value="Chromosome II"/>
</dbReference>
<dbReference type="GO" id="GO:0061574">
    <property type="term" value="C:ASAP complex"/>
    <property type="evidence" value="ECO:0000318"/>
    <property type="project" value="GO_Central"/>
</dbReference>
<dbReference type="GO" id="GO:0005737">
    <property type="term" value="C:cytoplasm"/>
    <property type="evidence" value="ECO:0000318"/>
    <property type="project" value="GO_Central"/>
</dbReference>
<dbReference type="GO" id="GO:0005829">
    <property type="term" value="C:cytosol"/>
    <property type="evidence" value="ECO:0007005"/>
    <property type="project" value="PomBase"/>
</dbReference>
<dbReference type="GO" id="GO:0035145">
    <property type="term" value="C:exon-exon junction complex"/>
    <property type="evidence" value="ECO:0000269"/>
    <property type="project" value="PomBase"/>
</dbReference>
<dbReference type="GO" id="GO:0005654">
    <property type="term" value="C:nucleoplasm"/>
    <property type="evidence" value="ECO:0000318"/>
    <property type="project" value="GO_Central"/>
</dbReference>
<dbReference type="GO" id="GO:0005634">
    <property type="term" value="C:nucleus"/>
    <property type="evidence" value="ECO:0007005"/>
    <property type="project" value="PomBase"/>
</dbReference>
<dbReference type="GO" id="GO:0003723">
    <property type="term" value="F:RNA binding"/>
    <property type="evidence" value="ECO:0000255"/>
    <property type="project" value="PomBase"/>
</dbReference>
<dbReference type="GO" id="GO:0000398">
    <property type="term" value="P:mRNA splicing, via spliceosome"/>
    <property type="evidence" value="ECO:0000318"/>
    <property type="project" value="GO_Central"/>
</dbReference>
<dbReference type="CDD" id="cd12365">
    <property type="entry name" value="RRM_RNPS1"/>
    <property type="match status" value="1"/>
</dbReference>
<dbReference type="FunFam" id="3.30.70.330:FF:000896">
    <property type="entry name" value="RNA-binding protein with serine-rich domain 1 homolog"/>
    <property type="match status" value="1"/>
</dbReference>
<dbReference type="Gene3D" id="3.30.70.330">
    <property type="match status" value="1"/>
</dbReference>
<dbReference type="InterPro" id="IPR012677">
    <property type="entry name" value="Nucleotide-bd_a/b_plait_sf"/>
</dbReference>
<dbReference type="InterPro" id="IPR035979">
    <property type="entry name" value="RBD_domain_sf"/>
</dbReference>
<dbReference type="InterPro" id="IPR034201">
    <property type="entry name" value="RNPS1_RRM"/>
</dbReference>
<dbReference type="InterPro" id="IPR000504">
    <property type="entry name" value="RRM_dom"/>
</dbReference>
<dbReference type="PANTHER" id="PTHR15481:SF0">
    <property type="entry name" value="LD23870P-RELATED"/>
    <property type="match status" value="1"/>
</dbReference>
<dbReference type="PANTHER" id="PTHR15481">
    <property type="entry name" value="RIBONUCLEIC ACID BINDING PROTEIN S1"/>
    <property type="match status" value="1"/>
</dbReference>
<dbReference type="Pfam" id="PF00076">
    <property type="entry name" value="RRM_1"/>
    <property type="match status" value="1"/>
</dbReference>
<dbReference type="SMART" id="SM00360">
    <property type="entry name" value="RRM"/>
    <property type="match status" value="1"/>
</dbReference>
<dbReference type="SUPFAM" id="SSF54928">
    <property type="entry name" value="RNA-binding domain, RBD"/>
    <property type="match status" value="1"/>
</dbReference>
<dbReference type="PROSITE" id="PS50102">
    <property type="entry name" value="RRM"/>
    <property type="match status" value="1"/>
</dbReference>
<gene>
    <name type="ORF">SPBC13G1.14c</name>
</gene>
<reference key="1">
    <citation type="journal article" date="2002" name="Nature">
        <title>The genome sequence of Schizosaccharomyces pombe.</title>
        <authorList>
            <person name="Wood V."/>
            <person name="Gwilliam R."/>
            <person name="Rajandream M.A."/>
            <person name="Lyne M.H."/>
            <person name="Lyne R."/>
            <person name="Stewart A."/>
            <person name="Sgouros J.G."/>
            <person name="Peat N."/>
            <person name="Hayles J."/>
            <person name="Baker S.G."/>
            <person name="Basham D."/>
            <person name="Bowman S."/>
            <person name="Brooks K."/>
            <person name="Brown D."/>
            <person name="Brown S."/>
            <person name="Chillingworth T."/>
            <person name="Churcher C.M."/>
            <person name="Collins M."/>
            <person name="Connor R."/>
            <person name="Cronin A."/>
            <person name="Davis P."/>
            <person name="Feltwell T."/>
            <person name="Fraser A."/>
            <person name="Gentles S."/>
            <person name="Goble A."/>
            <person name="Hamlin N."/>
            <person name="Harris D.E."/>
            <person name="Hidalgo J."/>
            <person name="Hodgson G."/>
            <person name="Holroyd S."/>
            <person name="Hornsby T."/>
            <person name="Howarth S."/>
            <person name="Huckle E.J."/>
            <person name="Hunt S."/>
            <person name="Jagels K."/>
            <person name="James K.D."/>
            <person name="Jones L."/>
            <person name="Jones M."/>
            <person name="Leather S."/>
            <person name="McDonald S."/>
            <person name="McLean J."/>
            <person name="Mooney P."/>
            <person name="Moule S."/>
            <person name="Mungall K.L."/>
            <person name="Murphy L.D."/>
            <person name="Niblett D."/>
            <person name="Odell C."/>
            <person name="Oliver K."/>
            <person name="O'Neil S."/>
            <person name="Pearson D."/>
            <person name="Quail M.A."/>
            <person name="Rabbinowitsch E."/>
            <person name="Rutherford K.M."/>
            <person name="Rutter S."/>
            <person name="Saunders D."/>
            <person name="Seeger K."/>
            <person name="Sharp S."/>
            <person name="Skelton J."/>
            <person name="Simmonds M.N."/>
            <person name="Squares R."/>
            <person name="Squares S."/>
            <person name="Stevens K."/>
            <person name="Taylor K."/>
            <person name="Taylor R.G."/>
            <person name="Tivey A."/>
            <person name="Walsh S.V."/>
            <person name="Warren T."/>
            <person name="Whitehead S."/>
            <person name="Woodward J.R."/>
            <person name="Volckaert G."/>
            <person name="Aert R."/>
            <person name="Robben J."/>
            <person name="Grymonprez B."/>
            <person name="Weltjens I."/>
            <person name="Vanstreels E."/>
            <person name="Rieger M."/>
            <person name="Schaefer M."/>
            <person name="Mueller-Auer S."/>
            <person name="Gabel C."/>
            <person name="Fuchs M."/>
            <person name="Duesterhoeft A."/>
            <person name="Fritzc C."/>
            <person name="Holzer E."/>
            <person name="Moestl D."/>
            <person name="Hilbert H."/>
            <person name="Borzym K."/>
            <person name="Langer I."/>
            <person name="Beck A."/>
            <person name="Lehrach H."/>
            <person name="Reinhardt R."/>
            <person name="Pohl T.M."/>
            <person name="Eger P."/>
            <person name="Zimmermann W."/>
            <person name="Wedler H."/>
            <person name="Wambutt R."/>
            <person name="Purnelle B."/>
            <person name="Goffeau A."/>
            <person name="Cadieu E."/>
            <person name="Dreano S."/>
            <person name="Gloux S."/>
            <person name="Lelaure V."/>
            <person name="Mottier S."/>
            <person name="Galibert F."/>
            <person name="Aves S.J."/>
            <person name="Xiang Z."/>
            <person name="Hunt C."/>
            <person name="Moore K."/>
            <person name="Hurst S.M."/>
            <person name="Lucas M."/>
            <person name="Rochet M."/>
            <person name="Gaillardin C."/>
            <person name="Tallada V.A."/>
            <person name="Garzon A."/>
            <person name="Thode G."/>
            <person name="Daga R.R."/>
            <person name="Cruzado L."/>
            <person name="Jimenez J."/>
            <person name="Sanchez M."/>
            <person name="del Rey F."/>
            <person name="Benito J."/>
            <person name="Dominguez A."/>
            <person name="Revuelta J.L."/>
            <person name="Moreno S."/>
            <person name="Armstrong J."/>
            <person name="Forsburg S.L."/>
            <person name="Cerutti L."/>
            <person name="Lowe T."/>
            <person name="McCombie W.R."/>
            <person name="Paulsen I."/>
            <person name="Potashkin J."/>
            <person name="Shpakovski G.V."/>
            <person name="Ussery D."/>
            <person name="Barrell B.G."/>
            <person name="Nurse P."/>
        </authorList>
    </citation>
    <scope>NUCLEOTIDE SEQUENCE [LARGE SCALE GENOMIC DNA]</scope>
    <source>
        <strain>972 / ATCC 24843</strain>
    </source>
</reference>
<reference key="2">
    <citation type="journal article" date="2006" name="Nat. Biotechnol.">
        <title>ORFeome cloning and global analysis of protein localization in the fission yeast Schizosaccharomyces pombe.</title>
        <authorList>
            <person name="Matsuyama A."/>
            <person name="Arai R."/>
            <person name="Yashiroda Y."/>
            <person name="Shirai A."/>
            <person name="Kamata A."/>
            <person name="Sekido S."/>
            <person name="Kobayashi Y."/>
            <person name="Hashimoto A."/>
            <person name="Hamamoto M."/>
            <person name="Hiraoka Y."/>
            <person name="Horinouchi S."/>
            <person name="Yoshida M."/>
        </authorList>
    </citation>
    <scope>SUBCELLULAR LOCATION [LARGE SCALE ANALYSIS]</scope>
</reference>
<name>RNPS1_SCHPO</name>
<evidence type="ECO:0000250" key="1"/>
<evidence type="ECO:0000255" key="2">
    <source>
        <dbReference type="PROSITE-ProRule" id="PRU00176"/>
    </source>
</evidence>
<evidence type="ECO:0000256" key="3">
    <source>
        <dbReference type="SAM" id="MobiDB-lite"/>
    </source>
</evidence>
<evidence type="ECO:0000269" key="4">
    <source>
    </source>
</evidence>
<evidence type="ECO:0000305" key="5"/>
<comment type="function">
    <text evidence="1">Putative component of the spliceosome which enhances the formation of the ATP-dependent A complex of the spliceosome. may participate in mRNA 3'-end cleavage. Also mediates increase of mRNA abundance and translational efficiency (By similarity).</text>
</comment>
<comment type="subunit">
    <text evidence="1">Component of the active spliceosome.</text>
</comment>
<comment type="subcellular location">
    <subcellularLocation>
        <location evidence="4">Cytoplasm</location>
    </subcellularLocation>
    <subcellularLocation>
        <location evidence="4">Nucleus</location>
    </subcellularLocation>
</comment>
<comment type="similarity">
    <text evidence="5">Belongs to the splicing factor SR family.</text>
</comment>